<dbReference type="EMBL" id="FM211187">
    <property type="protein sequence ID" value="CAR69364.1"/>
    <property type="molecule type" value="Genomic_DNA"/>
</dbReference>
<dbReference type="RefSeq" id="WP_000106354.1">
    <property type="nucleotide sequence ID" value="NC_011900.1"/>
</dbReference>
<dbReference type="SMR" id="B8ZLT1"/>
<dbReference type="KEGG" id="sne:SPN23F15860"/>
<dbReference type="HOGENOM" id="CLU_014218_8_2_9"/>
<dbReference type="GO" id="GO:0009376">
    <property type="term" value="C:HslUV protease complex"/>
    <property type="evidence" value="ECO:0007669"/>
    <property type="project" value="TreeGrafter"/>
</dbReference>
<dbReference type="GO" id="GO:0005524">
    <property type="term" value="F:ATP binding"/>
    <property type="evidence" value="ECO:0007669"/>
    <property type="project" value="UniProtKB-UniRule"/>
</dbReference>
<dbReference type="GO" id="GO:0016887">
    <property type="term" value="F:ATP hydrolysis activity"/>
    <property type="evidence" value="ECO:0007669"/>
    <property type="project" value="InterPro"/>
</dbReference>
<dbReference type="GO" id="GO:0140662">
    <property type="term" value="F:ATP-dependent protein folding chaperone"/>
    <property type="evidence" value="ECO:0007669"/>
    <property type="project" value="InterPro"/>
</dbReference>
<dbReference type="GO" id="GO:0046983">
    <property type="term" value="F:protein dimerization activity"/>
    <property type="evidence" value="ECO:0007669"/>
    <property type="project" value="InterPro"/>
</dbReference>
<dbReference type="GO" id="GO:0051082">
    <property type="term" value="F:unfolded protein binding"/>
    <property type="evidence" value="ECO:0007669"/>
    <property type="project" value="UniProtKB-UniRule"/>
</dbReference>
<dbReference type="GO" id="GO:0008270">
    <property type="term" value="F:zinc ion binding"/>
    <property type="evidence" value="ECO:0007669"/>
    <property type="project" value="InterPro"/>
</dbReference>
<dbReference type="GO" id="GO:0051301">
    <property type="term" value="P:cell division"/>
    <property type="evidence" value="ECO:0007669"/>
    <property type="project" value="TreeGrafter"/>
</dbReference>
<dbReference type="GO" id="GO:0051603">
    <property type="term" value="P:proteolysis involved in protein catabolic process"/>
    <property type="evidence" value="ECO:0007669"/>
    <property type="project" value="TreeGrafter"/>
</dbReference>
<dbReference type="CDD" id="cd19497">
    <property type="entry name" value="RecA-like_ClpX"/>
    <property type="match status" value="1"/>
</dbReference>
<dbReference type="FunFam" id="1.10.8.60:FF:000002">
    <property type="entry name" value="ATP-dependent Clp protease ATP-binding subunit ClpX"/>
    <property type="match status" value="1"/>
</dbReference>
<dbReference type="FunFam" id="3.40.50.300:FF:000005">
    <property type="entry name" value="ATP-dependent Clp protease ATP-binding subunit ClpX"/>
    <property type="match status" value="1"/>
</dbReference>
<dbReference type="Gene3D" id="1.10.8.60">
    <property type="match status" value="1"/>
</dbReference>
<dbReference type="Gene3D" id="6.20.220.10">
    <property type="entry name" value="ClpX chaperone, C4-type zinc finger domain"/>
    <property type="match status" value="1"/>
</dbReference>
<dbReference type="Gene3D" id="3.40.50.300">
    <property type="entry name" value="P-loop containing nucleotide triphosphate hydrolases"/>
    <property type="match status" value="1"/>
</dbReference>
<dbReference type="HAMAP" id="MF_00175">
    <property type="entry name" value="ClpX"/>
    <property type="match status" value="1"/>
</dbReference>
<dbReference type="InterPro" id="IPR003593">
    <property type="entry name" value="AAA+_ATPase"/>
</dbReference>
<dbReference type="InterPro" id="IPR050052">
    <property type="entry name" value="ATP-dep_Clp_protease_ClpX"/>
</dbReference>
<dbReference type="InterPro" id="IPR003959">
    <property type="entry name" value="ATPase_AAA_core"/>
</dbReference>
<dbReference type="InterPro" id="IPR019489">
    <property type="entry name" value="Clp_ATPase_C"/>
</dbReference>
<dbReference type="InterPro" id="IPR004487">
    <property type="entry name" value="Clp_protease_ATP-bd_su_ClpX"/>
</dbReference>
<dbReference type="InterPro" id="IPR046425">
    <property type="entry name" value="ClpX_bact"/>
</dbReference>
<dbReference type="InterPro" id="IPR027417">
    <property type="entry name" value="P-loop_NTPase"/>
</dbReference>
<dbReference type="InterPro" id="IPR010603">
    <property type="entry name" value="Znf_CppX_C4"/>
</dbReference>
<dbReference type="InterPro" id="IPR038366">
    <property type="entry name" value="Znf_CppX_C4_sf"/>
</dbReference>
<dbReference type="NCBIfam" id="TIGR00382">
    <property type="entry name" value="clpX"/>
    <property type="match status" value="1"/>
</dbReference>
<dbReference type="NCBIfam" id="NF003745">
    <property type="entry name" value="PRK05342.1"/>
    <property type="match status" value="1"/>
</dbReference>
<dbReference type="PANTHER" id="PTHR48102:SF7">
    <property type="entry name" value="ATP-DEPENDENT CLP PROTEASE ATP-BINDING SUBUNIT CLPX-LIKE, MITOCHONDRIAL"/>
    <property type="match status" value="1"/>
</dbReference>
<dbReference type="PANTHER" id="PTHR48102">
    <property type="entry name" value="ATP-DEPENDENT CLP PROTEASE ATP-BINDING SUBUNIT CLPX-LIKE, MITOCHONDRIAL-RELATED"/>
    <property type="match status" value="1"/>
</dbReference>
<dbReference type="Pfam" id="PF07724">
    <property type="entry name" value="AAA_2"/>
    <property type="match status" value="1"/>
</dbReference>
<dbReference type="Pfam" id="PF10431">
    <property type="entry name" value="ClpB_D2-small"/>
    <property type="match status" value="1"/>
</dbReference>
<dbReference type="Pfam" id="PF06689">
    <property type="entry name" value="zf-C4_ClpX"/>
    <property type="match status" value="1"/>
</dbReference>
<dbReference type="SMART" id="SM00382">
    <property type="entry name" value="AAA"/>
    <property type="match status" value="1"/>
</dbReference>
<dbReference type="SMART" id="SM01086">
    <property type="entry name" value="ClpB_D2-small"/>
    <property type="match status" value="1"/>
</dbReference>
<dbReference type="SMART" id="SM00994">
    <property type="entry name" value="zf-C4_ClpX"/>
    <property type="match status" value="1"/>
</dbReference>
<dbReference type="SUPFAM" id="SSF57716">
    <property type="entry name" value="Glucocorticoid receptor-like (DNA-binding domain)"/>
    <property type="match status" value="1"/>
</dbReference>
<dbReference type="SUPFAM" id="SSF52540">
    <property type="entry name" value="P-loop containing nucleoside triphosphate hydrolases"/>
    <property type="match status" value="1"/>
</dbReference>
<dbReference type="PROSITE" id="PS51902">
    <property type="entry name" value="CLPX_ZB"/>
    <property type="match status" value="1"/>
</dbReference>
<accession>B8ZLT1</accession>
<name>CLPX_STRPJ</name>
<reference key="1">
    <citation type="journal article" date="2009" name="J. Bacteriol.">
        <title>Role of conjugative elements in the evolution of the multidrug-resistant pandemic clone Streptococcus pneumoniae Spain23F ST81.</title>
        <authorList>
            <person name="Croucher N.J."/>
            <person name="Walker D."/>
            <person name="Romero P."/>
            <person name="Lennard N."/>
            <person name="Paterson G.K."/>
            <person name="Bason N.C."/>
            <person name="Mitchell A.M."/>
            <person name="Quail M.A."/>
            <person name="Andrew P.W."/>
            <person name="Parkhill J."/>
            <person name="Bentley S.D."/>
            <person name="Mitchell T.J."/>
        </authorList>
    </citation>
    <scope>NUCLEOTIDE SEQUENCE [LARGE SCALE GENOMIC DNA]</scope>
    <source>
        <strain>ATCC 700669 / Spain 23F-1</strain>
    </source>
</reference>
<feature type="chain" id="PRO_1000123853" description="ATP-dependent Clp protease ATP-binding subunit ClpX">
    <location>
        <begin position="1"/>
        <end position="410"/>
    </location>
</feature>
<feature type="domain" description="ClpX-type ZB" evidence="2">
    <location>
        <begin position="1"/>
        <end position="54"/>
    </location>
</feature>
<feature type="binding site" evidence="2">
    <location>
        <position position="13"/>
    </location>
    <ligand>
        <name>Zn(2+)</name>
        <dbReference type="ChEBI" id="CHEBI:29105"/>
    </ligand>
</feature>
<feature type="binding site" evidence="2">
    <location>
        <position position="16"/>
    </location>
    <ligand>
        <name>Zn(2+)</name>
        <dbReference type="ChEBI" id="CHEBI:29105"/>
    </ligand>
</feature>
<feature type="binding site" evidence="2">
    <location>
        <position position="35"/>
    </location>
    <ligand>
        <name>Zn(2+)</name>
        <dbReference type="ChEBI" id="CHEBI:29105"/>
    </ligand>
</feature>
<feature type="binding site" evidence="2">
    <location>
        <position position="38"/>
    </location>
    <ligand>
        <name>Zn(2+)</name>
        <dbReference type="ChEBI" id="CHEBI:29105"/>
    </ligand>
</feature>
<feature type="binding site" evidence="1">
    <location>
        <begin position="120"/>
        <end position="127"/>
    </location>
    <ligand>
        <name>ATP</name>
        <dbReference type="ChEBI" id="CHEBI:30616"/>
    </ligand>
</feature>
<sequence length="410" mass="45713">MSTNRKNDMMVYCSFCGKSQEEVQKIIAGNNAFICNECVELAQEIIREELVEEVLADLSEVPKPIELLHILNHYVIGQDRAKRALAVAVYNHYKRINFHDTREESEDVDLQKSNILMIGPTGSGKTFLAQTLAKSLNVPFAIADATALTEAGYVGEDVENILLKLLQAADFNIERAERGIIYVDEIDKIAKKSENVSITRDVSGEGVQQALLKIIEGTVASVPPQGGRKHPQQEMIQVDTKNILFIVGGAFDGIEEIVKQRLGEKVIGFGQNNKAIDENSSYMQEIIAEDIQKFGIIPELIGRLPVFAALEQLTVDDLVRILKEPRNALVKQYQTLLSYDDVELEFDDEALQEIANKAIERKTGARGLRSIIEETMLDVMFEVPSQENVKLVRITKEAVDGTDKPILETA</sequence>
<evidence type="ECO:0000255" key="1">
    <source>
        <dbReference type="HAMAP-Rule" id="MF_00175"/>
    </source>
</evidence>
<evidence type="ECO:0000255" key="2">
    <source>
        <dbReference type="PROSITE-ProRule" id="PRU01250"/>
    </source>
</evidence>
<gene>
    <name evidence="1" type="primary">clpX</name>
    <name type="ordered locus">SPN23F15860</name>
</gene>
<proteinExistence type="inferred from homology"/>
<keyword id="KW-0067">ATP-binding</keyword>
<keyword id="KW-0143">Chaperone</keyword>
<keyword id="KW-0479">Metal-binding</keyword>
<keyword id="KW-0547">Nucleotide-binding</keyword>
<keyword id="KW-0862">Zinc</keyword>
<protein>
    <recommendedName>
        <fullName evidence="1">ATP-dependent Clp protease ATP-binding subunit ClpX</fullName>
    </recommendedName>
</protein>
<organism>
    <name type="scientific">Streptococcus pneumoniae (strain ATCC 700669 / Spain 23F-1)</name>
    <dbReference type="NCBI Taxonomy" id="561276"/>
    <lineage>
        <taxon>Bacteria</taxon>
        <taxon>Bacillati</taxon>
        <taxon>Bacillota</taxon>
        <taxon>Bacilli</taxon>
        <taxon>Lactobacillales</taxon>
        <taxon>Streptococcaceae</taxon>
        <taxon>Streptococcus</taxon>
    </lineage>
</organism>
<comment type="function">
    <text evidence="1">ATP-dependent specificity component of the Clp protease. It directs the protease to specific substrates. Can perform chaperone functions in the absence of ClpP.</text>
</comment>
<comment type="subunit">
    <text evidence="1">Component of the ClpX-ClpP complex. Forms a hexameric ring that, in the presence of ATP, binds to fourteen ClpP subunits assembled into a disk-like structure with a central cavity, resembling the structure of eukaryotic proteasomes.</text>
</comment>
<comment type="similarity">
    <text evidence="1">Belongs to the ClpX chaperone family.</text>
</comment>